<sequence>MKLSIFFVLFFIAIAYCQPEFLDDEEDEVEETLPVAEEGREKSCITWRNSCMHYDKGCCFPWTCVCWSQTVSRNSSRKEKKCQCRLR</sequence>
<feature type="signal peptide" evidence="5">
    <location>
        <begin position="1"/>
        <end position="17"/>
    </location>
</feature>
<feature type="propeptide" id="PRO_0000388745" evidence="1">
    <location>
        <begin position="18"/>
        <end position="40"/>
    </location>
</feature>
<feature type="chain" id="PRO_0000388746" description="Omega-lycotoxin-Am1g">
    <location>
        <begin position="41"/>
        <end position="87"/>
    </location>
</feature>
<feature type="disulfide bond" evidence="2">
    <location>
        <begin position="44"/>
        <end position="59"/>
    </location>
</feature>
<feature type="disulfide bond" evidence="2">
    <location>
        <begin position="51"/>
        <end position="64"/>
    </location>
</feature>
<feature type="disulfide bond" evidence="2">
    <location>
        <begin position="58"/>
        <end position="84"/>
    </location>
</feature>
<feature type="disulfide bond" evidence="2">
    <location>
        <begin position="66"/>
        <end position="82"/>
    </location>
</feature>
<protein>
    <recommendedName>
        <fullName evidence="7">Omega-lycotoxin-Am1g</fullName>
        <shortName evidence="7">Omega-LCTX-Am1g</shortName>
    </recommendedName>
    <alternativeName>
        <fullName evidence="6 7">Omega-Lsp-IA-like 4</fullName>
    </alternativeName>
    <alternativeName>
        <fullName evidence="7">Omega-lycotoxin-Gsp(267)1g</fullName>
        <shortName evidence="7">Omega-LCTX-Gsp(267)1g</shortName>
    </alternativeName>
</protein>
<dbReference type="EMBL" id="EF187335">
    <property type="protein sequence ID" value="ABP68829.1"/>
    <property type="molecule type" value="mRNA"/>
</dbReference>
<dbReference type="ArachnoServer" id="AS000563">
    <property type="toxin name" value="omega-lycotoxin-Gsp2671g"/>
</dbReference>
<dbReference type="GO" id="GO:0005576">
    <property type="term" value="C:extracellular region"/>
    <property type="evidence" value="ECO:0007669"/>
    <property type="project" value="UniProtKB-SubCell"/>
</dbReference>
<dbReference type="GO" id="GO:0005246">
    <property type="term" value="F:calcium channel regulator activity"/>
    <property type="evidence" value="ECO:0007669"/>
    <property type="project" value="UniProtKB-KW"/>
</dbReference>
<dbReference type="GO" id="GO:0090729">
    <property type="term" value="F:toxin activity"/>
    <property type="evidence" value="ECO:0007669"/>
    <property type="project" value="UniProtKB-KW"/>
</dbReference>
<keyword id="KW-0108">Calcium channel impairing toxin</keyword>
<keyword id="KW-1015">Disulfide bond</keyword>
<keyword id="KW-0872">Ion channel impairing toxin</keyword>
<keyword id="KW-0960">Knottin</keyword>
<keyword id="KW-0528">Neurotoxin</keyword>
<keyword id="KW-0964">Secreted</keyword>
<keyword id="KW-0732">Signal</keyword>
<keyword id="KW-0800">Toxin</keyword>
<keyword id="KW-1218">Voltage-gated calcium channel impairing toxin</keyword>
<accession>A9XDG3</accession>
<name>TLCOG_ALOMR</name>
<proteinExistence type="inferred from homology"/>
<reference key="1">
    <citation type="journal article" date="2007" name="Toxicon">
        <title>Omega-Lsp-IA, a novel modulator of P-type Ca(2+) channels.</title>
        <authorList>
            <person name="Pluzhnikov K.A."/>
            <person name="Vassilevski A."/>
            <person name="Korolkova Y."/>
            <person name="Fisyunov A."/>
            <person name="Iegorova O."/>
            <person name="Krishtal O."/>
            <person name="Grishin E."/>
        </authorList>
    </citation>
    <scope>NUCLEOTIDE SEQUENCE [MRNA]</scope>
    <source>
        <tissue>Venom gland</tissue>
    </source>
</reference>
<evidence type="ECO:0000250" key="1"/>
<evidence type="ECO:0000250" key="2">
    <source>
        <dbReference type="UniProtKB" id="A0A0G3F8Z3"/>
    </source>
</evidence>
<evidence type="ECO:0000250" key="3">
    <source>
        <dbReference type="UniProtKB" id="P0DRA9"/>
    </source>
</evidence>
<evidence type="ECO:0000250" key="4">
    <source>
        <dbReference type="UniProtKB" id="P85079"/>
    </source>
</evidence>
<evidence type="ECO:0000255" key="5"/>
<evidence type="ECO:0000303" key="6">
    <source>
    </source>
</evidence>
<evidence type="ECO:0000305" key="7"/>
<evidence type="ECO:0000305" key="8">
    <source>
    </source>
</evidence>
<comment type="function">
    <text evidence="3 4">Modulates Cav2.1/CACNA1A voltage-gated calcium channels (P/Q-type currents) in rat cerebellar Purkinje cells and hippocampal CA1-CA3 neurons (By similarity). At saturating concentrations (&gt;10 nM) decelerates activation kinetics and slightly increases peak amplitude without affecting deactivation kinetics (By similarity). In vivo, does not cause death when intravenously injected into mice (By similarity). In rat models, through its activity on Cav2.1/CACNA1A, has an ameliorative effect on memory defects provoked by hyperstimulation of N-methyl-D-aspartate receptors (NMDARs) in the hippocampus (By similarity).</text>
</comment>
<comment type="subcellular location">
    <subcellularLocation>
        <location evidence="8">Secreted</location>
    </subcellularLocation>
</comment>
<comment type="tissue specificity">
    <text evidence="8">Expressed by the venom gland.</text>
</comment>
<comment type="domain">
    <text evidence="7">The presence of a 'disulfide through disulfide knot' structurally defines this protein as a knottin.</text>
</comment>
<comment type="miscellaneous">
    <text evidence="7">According to the nomenclature proposed by King and colleagues (2008), 'Gsp(267)' comes from the species name 'Geolycosa sp (strain A267TDLS2-KZARNA)' (PubMed:17888477). This species has been reclassified since that study, as indicated in the work of Oparin and colleagues (2016) (PMID:27412961).</text>
</comment>
<comment type="similarity">
    <text evidence="7">Belongs to the neurotoxin omega-lctx family.</text>
</comment>
<organism>
    <name type="scientific">Alopecosa marikovskyi</name>
    <name type="common">Wolf spider</name>
    <name type="synonym">Lycosa kazakhstanicus</name>
    <dbReference type="NCBI Taxonomy" id="2066572"/>
    <lineage>
        <taxon>Eukaryota</taxon>
        <taxon>Metazoa</taxon>
        <taxon>Ecdysozoa</taxon>
        <taxon>Arthropoda</taxon>
        <taxon>Chelicerata</taxon>
        <taxon>Arachnida</taxon>
        <taxon>Araneae</taxon>
        <taxon>Araneomorphae</taxon>
        <taxon>Entelegynae</taxon>
        <taxon>Lycosoidea</taxon>
        <taxon>Lycosidae</taxon>
        <taxon>Alopecosa</taxon>
    </lineage>
</organism>